<accession>A0A1L9WQK0</accession>
<feature type="chain" id="PRO_0000460552" description="ABC-type transporter vrcC">
    <location>
        <begin position="1"/>
        <end position="1413"/>
    </location>
</feature>
<feature type="transmembrane region" description="Helical" evidence="1">
    <location>
        <begin position="476"/>
        <end position="496"/>
    </location>
</feature>
<feature type="transmembrane region" description="Helical" evidence="1">
    <location>
        <begin position="510"/>
        <end position="530"/>
    </location>
</feature>
<feature type="transmembrane region" description="Helical" evidence="1">
    <location>
        <begin position="564"/>
        <end position="584"/>
    </location>
</feature>
<feature type="transmembrane region" description="Helical" evidence="1">
    <location>
        <begin position="683"/>
        <end position="703"/>
    </location>
</feature>
<feature type="transmembrane region" description="Helical" evidence="1">
    <location>
        <begin position="1105"/>
        <end position="1125"/>
    </location>
</feature>
<feature type="transmembrane region" description="Helical" evidence="1">
    <location>
        <begin position="1142"/>
        <end position="1162"/>
    </location>
</feature>
<feature type="transmembrane region" description="Helical" evidence="1">
    <location>
        <begin position="1191"/>
        <end position="1211"/>
    </location>
</feature>
<feature type="transmembrane region" description="Helical" evidence="1">
    <location>
        <begin position="1230"/>
        <end position="1250"/>
    </location>
</feature>
<feature type="transmembrane region" description="Helical" evidence="1">
    <location>
        <begin position="1266"/>
        <end position="1286"/>
    </location>
</feature>
<feature type="transmembrane region" description="Helical" evidence="1">
    <location>
        <begin position="1290"/>
        <end position="1310"/>
    </location>
</feature>
<feature type="transmembrane region" description="Helical" evidence="1">
    <location>
        <begin position="1378"/>
        <end position="1398"/>
    </location>
</feature>
<feature type="domain" description="ABC transporter 1" evidence="2">
    <location>
        <begin position="108"/>
        <end position="365"/>
    </location>
</feature>
<feature type="domain" description="ABC transporter 2" evidence="2">
    <location>
        <begin position="761"/>
        <end position="1003"/>
    </location>
</feature>
<feature type="region of interest" description="Disordered" evidence="4">
    <location>
        <begin position="725"/>
        <end position="748"/>
    </location>
</feature>
<feature type="compositionally biased region" description="Basic and acidic residues" evidence="4">
    <location>
        <begin position="739"/>
        <end position="748"/>
    </location>
</feature>
<feature type="glycosylation site" description="N-linked (GlcNAc...) asparagine" evidence="3">
    <location>
        <position position="289"/>
    </location>
</feature>
<feature type="glycosylation site" description="N-linked (GlcNAc...) asparagine" evidence="3">
    <location>
        <position position="501"/>
    </location>
</feature>
<feature type="glycosylation site" description="N-linked (GlcNAc...) asparagine" evidence="3">
    <location>
        <position position="675"/>
    </location>
</feature>
<feature type="glycosylation site" description="N-linked (GlcNAc...) asparagine" evidence="3">
    <location>
        <position position="738"/>
    </location>
</feature>
<feature type="glycosylation site" description="N-linked (GlcNAc...) asparagine" evidence="3">
    <location>
        <position position="1324"/>
    </location>
</feature>
<keyword id="KW-0067">ATP-binding</keyword>
<keyword id="KW-1003">Cell membrane</keyword>
<keyword id="KW-0325">Glycoprotein</keyword>
<keyword id="KW-0472">Membrane</keyword>
<keyword id="KW-0547">Nucleotide-binding</keyword>
<keyword id="KW-1185">Reference proteome</keyword>
<keyword id="KW-0677">Repeat</keyword>
<keyword id="KW-0812">Transmembrane</keyword>
<keyword id="KW-1133">Transmembrane helix</keyword>
<keyword id="KW-0813">Transport</keyword>
<comment type="function">
    <text evidence="5 8">ABC-type transporter; part of the gene cluster that mediates the biosynthesis of the sesterterpene variecolin (PubMed:38261827). VrcC is probably involved in the secretion of variecolin (Probable).</text>
</comment>
<comment type="subcellular location">
    <subcellularLocation>
        <location evidence="7">Cell membrane</location>
        <topology evidence="1">Multi-pass membrane protein</topology>
    </subcellularLocation>
</comment>
<comment type="biotechnology">
    <text evidence="5">Variecolin and its derivatives produced by employing P450 monooxygenases from other fungal terpenoid pathways exhibit anticancer activity, thus, the skeleton of variecolin could be considered a privileged scaffold for developing anticancer agents.</text>
</comment>
<comment type="similarity">
    <text evidence="7">Belongs to the ABC transporter superfamily. ABCG family. PDR (TC 3.A.1.205) subfamily.</text>
</comment>
<reference key="1">
    <citation type="journal article" date="2017" name="Genome Biol.">
        <title>Comparative genomics reveals high biological diversity and specific adaptations in the industrially and medically important fungal genus Aspergillus.</title>
        <authorList>
            <person name="de Vries R.P."/>
            <person name="Riley R."/>
            <person name="Wiebenga A."/>
            <person name="Aguilar-Osorio G."/>
            <person name="Amillis S."/>
            <person name="Uchima C.A."/>
            <person name="Anderluh G."/>
            <person name="Asadollahi M."/>
            <person name="Askin M."/>
            <person name="Barry K."/>
            <person name="Battaglia E."/>
            <person name="Bayram O."/>
            <person name="Benocci T."/>
            <person name="Braus-Stromeyer S.A."/>
            <person name="Caldana C."/>
            <person name="Canovas D."/>
            <person name="Cerqueira G.C."/>
            <person name="Chen F."/>
            <person name="Chen W."/>
            <person name="Choi C."/>
            <person name="Clum A."/>
            <person name="Dos Santos R.A."/>
            <person name="Damasio A.R."/>
            <person name="Diallinas G."/>
            <person name="Emri T."/>
            <person name="Fekete E."/>
            <person name="Flipphi M."/>
            <person name="Freyberg S."/>
            <person name="Gallo A."/>
            <person name="Gournas C."/>
            <person name="Habgood R."/>
            <person name="Hainaut M."/>
            <person name="Harispe M.L."/>
            <person name="Henrissat B."/>
            <person name="Hilden K.S."/>
            <person name="Hope R."/>
            <person name="Hossain A."/>
            <person name="Karabika E."/>
            <person name="Karaffa L."/>
            <person name="Karanyi Z."/>
            <person name="Krasevec N."/>
            <person name="Kuo A."/>
            <person name="Kusch H."/>
            <person name="LaButti K."/>
            <person name="Lagendijk E.L."/>
            <person name="Lapidus A."/>
            <person name="Levasseur A."/>
            <person name="Lindquist E."/>
            <person name="Lipzen A."/>
            <person name="Logrieco A.F."/>
            <person name="MacCabe A."/>
            <person name="Maekelae M.R."/>
            <person name="Malavazi I."/>
            <person name="Melin P."/>
            <person name="Meyer V."/>
            <person name="Mielnichuk N."/>
            <person name="Miskei M."/>
            <person name="Molnar A.P."/>
            <person name="Mule G."/>
            <person name="Ngan C.Y."/>
            <person name="Orejas M."/>
            <person name="Orosz E."/>
            <person name="Ouedraogo J.P."/>
            <person name="Overkamp K.M."/>
            <person name="Park H.-S."/>
            <person name="Perrone G."/>
            <person name="Piumi F."/>
            <person name="Punt P.J."/>
            <person name="Ram A.F."/>
            <person name="Ramon A."/>
            <person name="Rauscher S."/>
            <person name="Record E."/>
            <person name="Riano-Pachon D.M."/>
            <person name="Robert V."/>
            <person name="Roehrig J."/>
            <person name="Ruller R."/>
            <person name="Salamov A."/>
            <person name="Salih N.S."/>
            <person name="Samson R.A."/>
            <person name="Sandor E."/>
            <person name="Sanguinetti M."/>
            <person name="Schuetze T."/>
            <person name="Sepcic K."/>
            <person name="Shelest E."/>
            <person name="Sherlock G."/>
            <person name="Sophianopoulou V."/>
            <person name="Squina F.M."/>
            <person name="Sun H."/>
            <person name="Susca A."/>
            <person name="Todd R.B."/>
            <person name="Tsang A."/>
            <person name="Unkles S.E."/>
            <person name="van de Wiele N."/>
            <person name="van Rossen-Uffink D."/>
            <person name="Oliveira J.V."/>
            <person name="Vesth T.C."/>
            <person name="Visser J."/>
            <person name="Yu J.-H."/>
            <person name="Zhou M."/>
            <person name="Andersen M.R."/>
            <person name="Archer D.B."/>
            <person name="Baker S.E."/>
            <person name="Benoit I."/>
            <person name="Brakhage A.A."/>
            <person name="Braus G.H."/>
            <person name="Fischer R."/>
            <person name="Frisvad J.C."/>
            <person name="Goldman G.H."/>
            <person name="Houbraken J."/>
            <person name="Oakley B."/>
            <person name="Pocsi I."/>
            <person name="Scazzocchio C."/>
            <person name="Seiboth B."/>
            <person name="vanKuyk P.A."/>
            <person name="Wortman J."/>
            <person name="Dyer P.S."/>
            <person name="Grigoriev I.V."/>
        </authorList>
    </citation>
    <scope>NUCLEOTIDE SEQUENCE [LARGE SCALE GENOMIC DNA]</scope>
    <source>
        <strain>ATCC 16872 / CBS 172.66 / WB 5094</strain>
    </source>
</reference>
<reference key="2">
    <citation type="journal article" date="2024" name="Acta Pharm. Sin. B (APSB)">
        <title>Genomics-driven derivatization of the bioactive fungal sesterterpenoid variecolin: Creation of an unnatural analogue with improved anticancer properties.</title>
        <authorList>
            <person name="Yan D."/>
            <person name="Arakelyan J."/>
            <person name="Wan T."/>
            <person name="Raina R."/>
            <person name="Chan T.K."/>
            <person name="Ahn D."/>
            <person name="Kushnarev V."/>
            <person name="Cheung T.K."/>
            <person name="Chan H.C."/>
            <person name="Choi I."/>
            <person name="Ho P.Y."/>
            <person name="Hu F."/>
            <person name="Kim Y."/>
            <person name="Lau H.L."/>
            <person name="Law Y.L."/>
            <person name="Leung C.S."/>
            <person name="Tong C.Y."/>
            <person name="Wong K.K."/>
            <person name="Yim W.L."/>
            <person name="Karnaukhov N.S."/>
            <person name="Kong R.Y.C."/>
            <person name="Babak M.V."/>
            <person name="Matsuda Y."/>
        </authorList>
    </citation>
    <scope>FUNCTION</scope>
    <scope>BIOTECHNOLOGY</scope>
</reference>
<evidence type="ECO:0000255" key="1"/>
<evidence type="ECO:0000255" key="2">
    <source>
        <dbReference type="PROSITE-ProRule" id="PRU00434"/>
    </source>
</evidence>
<evidence type="ECO:0000255" key="3">
    <source>
        <dbReference type="PROSITE-ProRule" id="PRU00498"/>
    </source>
</evidence>
<evidence type="ECO:0000256" key="4">
    <source>
        <dbReference type="SAM" id="MobiDB-lite"/>
    </source>
</evidence>
<evidence type="ECO:0000269" key="5">
    <source>
    </source>
</evidence>
<evidence type="ECO:0000303" key="6">
    <source>
    </source>
</evidence>
<evidence type="ECO:0000305" key="7"/>
<evidence type="ECO:0000305" key="8">
    <source>
    </source>
</evidence>
<gene>
    <name evidence="6" type="primary">vrcC</name>
    <name type="ORF">ASPACDRAFT_61942</name>
</gene>
<dbReference type="EMBL" id="KV878980">
    <property type="protein sequence ID" value="OJJ98431.1"/>
    <property type="molecule type" value="Genomic_DNA"/>
</dbReference>
<dbReference type="RefSeq" id="XP_020054771.1">
    <property type="nucleotide sequence ID" value="XM_020203727.1"/>
</dbReference>
<dbReference type="SMR" id="A0A1L9WQK0"/>
<dbReference type="STRING" id="690307.A0A1L9WQK0"/>
<dbReference type="GeneID" id="30977541"/>
<dbReference type="VEuPathDB" id="FungiDB:ASPACDRAFT_61942"/>
<dbReference type="OMA" id="FNIFAAC"/>
<dbReference type="OrthoDB" id="245989at2759"/>
<dbReference type="Proteomes" id="UP000184546">
    <property type="component" value="Unassembled WGS sequence"/>
</dbReference>
<dbReference type="GO" id="GO:0005886">
    <property type="term" value="C:plasma membrane"/>
    <property type="evidence" value="ECO:0007669"/>
    <property type="project" value="UniProtKB-SubCell"/>
</dbReference>
<dbReference type="GO" id="GO:0140359">
    <property type="term" value="F:ABC-type transporter activity"/>
    <property type="evidence" value="ECO:0007669"/>
    <property type="project" value="InterPro"/>
</dbReference>
<dbReference type="GO" id="GO:0005524">
    <property type="term" value="F:ATP binding"/>
    <property type="evidence" value="ECO:0007669"/>
    <property type="project" value="UniProtKB-KW"/>
</dbReference>
<dbReference type="GO" id="GO:0016887">
    <property type="term" value="F:ATP hydrolysis activity"/>
    <property type="evidence" value="ECO:0007669"/>
    <property type="project" value="InterPro"/>
</dbReference>
<dbReference type="CDD" id="cd03233">
    <property type="entry name" value="ABCG_PDR_domain1"/>
    <property type="match status" value="1"/>
</dbReference>
<dbReference type="CDD" id="cd03232">
    <property type="entry name" value="ABCG_PDR_domain2"/>
    <property type="match status" value="1"/>
</dbReference>
<dbReference type="FunFam" id="3.40.50.300:FF:000881">
    <property type="entry name" value="ABC multidrug transporter A-1"/>
    <property type="match status" value="1"/>
</dbReference>
<dbReference type="FunFam" id="3.40.50.300:FF:000054">
    <property type="entry name" value="ABC multidrug transporter atrF"/>
    <property type="match status" value="1"/>
</dbReference>
<dbReference type="Gene3D" id="3.40.50.300">
    <property type="entry name" value="P-loop containing nucleotide triphosphate hydrolases"/>
    <property type="match status" value="2"/>
</dbReference>
<dbReference type="InterPro" id="IPR003593">
    <property type="entry name" value="AAA+_ATPase"/>
</dbReference>
<dbReference type="InterPro" id="IPR013525">
    <property type="entry name" value="ABC2_TM"/>
</dbReference>
<dbReference type="InterPro" id="IPR029481">
    <property type="entry name" value="ABC_trans_N"/>
</dbReference>
<dbReference type="InterPro" id="IPR003439">
    <property type="entry name" value="ABC_transporter-like_ATP-bd"/>
</dbReference>
<dbReference type="InterPro" id="IPR043926">
    <property type="entry name" value="ABCG_dom"/>
</dbReference>
<dbReference type="InterPro" id="IPR034001">
    <property type="entry name" value="ABCG_PDR_1"/>
</dbReference>
<dbReference type="InterPro" id="IPR034003">
    <property type="entry name" value="ABCG_PDR_2"/>
</dbReference>
<dbReference type="InterPro" id="IPR027417">
    <property type="entry name" value="P-loop_NTPase"/>
</dbReference>
<dbReference type="InterPro" id="IPR010929">
    <property type="entry name" value="PDR_CDR_ABC"/>
</dbReference>
<dbReference type="PANTHER" id="PTHR19241">
    <property type="entry name" value="ATP-BINDING CASSETTE TRANSPORTER"/>
    <property type="match status" value="1"/>
</dbReference>
<dbReference type="Pfam" id="PF01061">
    <property type="entry name" value="ABC2_membrane"/>
    <property type="match status" value="2"/>
</dbReference>
<dbReference type="Pfam" id="PF19055">
    <property type="entry name" value="ABC2_membrane_7"/>
    <property type="match status" value="1"/>
</dbReference>
<dbReference type="Pfam" id="PF00005">
    <property type="entry name" value="ABC_tran"/>
    <property type="match status" value="2"/>
</dbReference>
<dbReference type="Pfam" id="PF14510">
    <property type="entry name" value="ABC_trans_N"/>
    <property type="match status" value="1"/>
</dbReference>
<dbReference type="Pfam" id="PF06422">
    <property type="entry name" value="PDR_CDR"/>
    <property type="match status" value="1"/>
</dbReference>
<dbReference type="SMART" id="SM00382">
    <property type="entry name" value="AAA"/>
    <property type="match status" value="2"/>
</dbReference>
<dbReference type="SUPFAM" id="SSF52540">
    <property type="entry name" value="P-loop containing nucleoside triphosphate hydrolases"/>
    <property type="match status" value="2"/>
</dbReference>
<dbReference type="PROSITE" id="PS50893">
    <property type="entry name" value="ABC_TRANSPORTER_2"/>
    <property type="match status" value="2"/>
</dbReference>
<protein>
    <recommendedName>
        <fullName evidence="6">ABC-type transporter vrcC</fullName>
    </recommendedName>
    <alternativeName>
        <fullName evidence="6">Variecolin biosynthesis cluster protein C</fullName>
    </alternativeName>
</protein>
<organism>
    <name type="scientific">Aspergillus aculeatus (strain ATCC 16872 / CBS 172.66 / WB 5094)</name>
    <dbReference type="NCBI Taxonomy" id="690307"/>
    <lineage>
        <taxon>Eukaryota</taxon>
        <taxon>Fungi</taxon>
        <taxon>Dikarya</taxon>
        <taxon>Ascomycota</taxon>
        <taxon>Pezizomycotina</taxon>
        <taxon>Eurotiomycetes</taxon>
        <taxon>Eurotiomycetidae</taxon>
        <taxon>Eurotiales</taxon>
        <taxon>Aspergillaceae</taxon>
        <taxon>Aspergillus</taxon>
        <taxon>Aspergillus subgen. Circumdati</taxon>
    </lineage>
</organism>
<name>VRCC_ASPA1</name>
<proteinExistence type="evidence at protein level"/>
<sequence length="1413" mass="157474">MADDHKVESGLNTHVEKRAEEVHQLARQFTEQSTFSTAGQNPFAAEPGSVLDPIGNNFDALAWCKAMLHVHTEDEKAHPLRTLGIAFNNLYVHGFGSDTDYQKSVGNVWFEALALARKALGTQNQRRIQILQNLEGTVEAGEMLVVLGPPGSGCSTFLKTIAGETDGFHIDKESSINYQGVSAKKMAHEFRGEAIYAAEVDVHFPKLTVGDTLYFAARARAPRHIPGGVDVAQYASHKRDVIMAILGISHTKNTIVGNDFIRGVSGGERKRVSIAEACLSSAPLQCWDNSTRGLDSANAIEFCKALRMQADINGATVCVSLYQAPQAAYHYFDKVLVLYEGRQIFFGRTDAAKQYFLDMGFACPERQTDADFLTSMTSHIERVVQPGYEGCVPRTPDEFAARWRGSHQRARVLQDVENYNTKFTLNGEFLGKFRHSRRAQQARVQRVSSPYTLSYAQQVNLCLWRGYQRLKADPSVTISSLIGNVITALVIASIFYNLQPNTSTFFQRGALLFFACLINALGCGLEMLTLYAQRGIVEKHARYALYHPSAEAISSMIMDLPFKVLNAILSLVQALPFCAVVLLGLYSYTGFAIPTGYMLGWARWIAYINPINYGFESLLINEFHDRDFQCVAIVPSGPSYMDLHSRNQVCSTVGSVPGQAFVNGDAYIQSAYDYNVSHKWRNIGIILAFMVVLGAIYLVATDFITEKKSKGEILVFPRGHGALKSGKPDDFEGGSDRNASQEKSKSDRDDLTVIESQTAIFQWQDVCFDIKIGKESRRILDHVDGWVKPGTLTALMGVSGAGKTTLLDVLATRTTLGVISGEMLVDGKPRDESFQRKTGYAQQQDLHLSTATVREALEFSALLRQPAHVPRREKINYVTEVIKLLDMADYADAVIGVPGEGLNVEQRKRLTIGVELAARPALLLFLDEPTSGLDSQTSWAILDLLNKLRKNGQAILCTIHQPSAMLFQRFDRLLFLQAGGQTVYFGDIGQNSQILIDYFVRNGGPPCPPAANPAEWMLDVIGAAPGSHTDIDWFETWRNSPEYAQVQAHLSSLKLEHAQQNPLARVSPGTEREDRASYREFAAPFCAQLREVQIRVFQQFWRSPIYIYSKAILCVLPALFVGFSLFNTPNTIQGLQNQMFSIFLLLIQFGQLIQQIMPHFVTQRALYEVRERPSKTYSWTVFMLSNIGVELFWNSLMSILMFLCWYYPIGMYRNAEPSDTVHLRGAQMWLLIWTFLLFSSTFAHFMIAALDAAENAGNLGSFLLLLCLLFCGVLATPAQLPGFWIFMYRVSPFTYLVSGMLAVGIADTTVTCADNEYLRFDPVNDTTCGQYLAPYIAQAGGYLHDETATAACRFCPVADTNAYLRGVGASYADVWRNFGLMWVFIFTNIVAACLLYWWTRVPRVKKPVVAPQA</sequence>